<proteinExistence type="inferred from homology"/>
<sequence length="275" mass="30169">MPQVTMRQMLEAGVHFGHQTRYWNPKMAPYIFGARGKIHIINLEKTVPLFNDAMNFLSSIAQKRGTVLFLGTKRSARESIKEEAERCNMPFMTQRWLGGTLTNFRTVKQSVARLKELEAAETDGTFEKLVKHEVLGLRREREKLDASLGGIKEMNRLPDAIFVIDIGHEDIAIKEAKKLGIPVIAVVDTNYDPALVDYAIPGNDDAIRAVQLYARAAADAVLEGKAAAPNSASVREEEFSAEAGDEGKGRRAPAKKATEKKADAPAAAPEAPAAE</sequence>
<reference key="1">
    <citation type="journal article" date="2008" name="J. Biotechnol.">
        <title>The genome of Xanthomonas campestris pv. campestris B100 and its use for the reconstruction of metabolic pathways involved in xanthan biosynthesis.</title>
        <authorList>
            <person name="Vorhoelter F.-J."/>
            <person name="Schneiker S."/>
            <person name="Goesmann A."/>
            <person name="Krause L."/>
            <person name="Bekel T."/>
            <person name="Kaiser O."/>
            <person name="Linke B."/>
            <person name="Patschkowski T."/>
            <person name="Rueckert C."/>
            <person name="Schmid J."/>
            <person name="Sidhu V.K."/>
            <person name="Sieber V."/>
            <person name="Tauch A."/>
            <person name="Watt S.A."/>
            <person name="Weisshaar B."/>
            <person name="Becker A."/>
            <person name="Niehaus K."/>
            <person name="Puehler A."/>
        </authorList>
    </citation>
    <scope>NUCLEOTIDE SEQUENCE [LARGE SCALE GENOMIC DNA]</scope>
    <source>
        <strain>B100</strain>
    </source>
</reference>
<keyword id="KW-0687">Ribonucleoprotein</keyword>
<keyword id="KW-0689">Ribosomal protein</keyword>
<evidence type="ECO:0000255" key="1">
    <source>
        <dbReference type="HAMAP-Rule" id="MF_00291"/>
    </source>
</evidence>
<evidence type="ECO:0000256" key="2">
    <source>
        <dbReference type="SAM" id="MobiDB-lite"/>
    </source>
</evidence>
<evidence type="ECO:0000305" key="3"/>
<dbReference type="EMBL" id="AM920689">
    <property type="protein sequence ID" value="CAP52283.1"/>
    <property type="molecule type" value="Genomic_DNA"/>
</dbReference>
<dbReference type="SMR" id="B0RW65"/>
<dbReference type="KEGG" id="xca:xcc-b100_2922"/>
<dbReference type="HOGENOM" id="CLU_040318_1_2_6"/>
<dbReference type="Proteomes" id="UP000001188">
    <property type="component" value="Chromosome"/>
</dbReference>
<dbReference type="GO" id="GO:0022627">
    <property type="term" value="C:cytosolic small ribosomal subunit"/>
    <property type="evidence" value="ECO:0007669"/>
    <property type="project" value="TreeGrafter"/>
</dbReference>
<dbReference type="GO" id="GO:0003735">
    <property type="term" value="F:structural constituent of ribosome"/>
    <property type="evidence" value="ECO:0007669"/>
    <property type="project" value="InterPro"/>
</dbReference>
<dbReference type="GO" id="GO:0006412">
    <property type="term" value="P:translation"/>
    <property type="evidence" value="ECO:0007669"/>
    <property type="project" value="UniProtKB-UniRule"/>
</dbReference>
<dbReference type="CDD" id="cd01425">
    <property type="entry name" value="RPS2"/>
    <property type="match status" value="1"/>
</dbReference>
<dbReference type="FunFam" id="1.10.287.610:FF:000001">
    <property type="entry name" value="30S ribosomal protein S2"/>
    <property type="match status" value="1"/>
</dbReference>
<dbReference type="Gene3D" id="3.40.50.10490">
    <property type="entry name" value="Glucose-6-phosphate isomerase like protein, domain 1"/>
    <property type="match status" value="1"/>
</dbReference>
<dbReference type="Gene3D" id="1.10.287.610">
    <property type="entry name" value="Helix hairpin bin"/>
    <property type="match status" value="1"/>
</dbReference>
<dbReference type="HAMAP" id="MF_00291_B">
    <property type="entry name" value="Ribosomal_uS2_B"/>
    <property type="match status" value="1"/>
</dbReference>
<dbReference type="InterPro" id="IPR001865">
    <property type="entry name" value="Ribosomal_uS2"/>
</dbReference>
<dbReference type="InterPro" id="IPR005706">
    <property type="entry name" value="Ribosomal_uS2_bac/mit/plastid"/>
</dbReference>
<dbReference type="InterPro" id="IPR018130">
    <property type="entry name" value="Ribosomal_uS2_CS"/>
</dbReference>
<dbReference type="InterPro" id="IPR023591">
    <property type="entry name" value="Ribosomal_uS2_flav_dom_sf"/>
</dbReference>
<dbReference type="NCBIfam" id="TIGR01011">
    <property type="entry name" value="rpsB_bact"/>
    <property type="match status" value="1"/>
</dbReference>
<dbReference type="PANTHER" id="PTHR12534">
    <property type="entry name" value="30S RIBOSOMAL PROTEIN S2 PROKARYOTIC AND ORGANELLAR"/>
    <property type="match status" value="1"/>
</dbReference>
<dbReference type="PANTHER" id="PTHR12534:SF0">
    <property type="entry name" value="SMALL RIBOSOMAL SUBUNIT PROTEIN US2M"/>
    <property type="match status" value="1"/>
</dbReference>
<dbReference type="Pfam" id="PF00318">
    <property type="entry name" value="Ribosomal_S2"/>
    <property type="match status" value="1"/>
</dbReference>
<dbReference type="PRINTS" id="PR00395">
    <property type="entry name" value="RIBOSOMALS2"/>
</dbReference>
<dbReference type="SUPFAM" id="SSF52313">
    <property type="entry name" value="Ribosomal protein S2"/>
    <property type="match status" value="1"/>
</dbReference>
<dbReference type="PROSITE" id="PS00962">
    <property type="entry name" value="RIBOSOMAL_S2_1"/>
    <property type="match status" value="1"/>
</dbReference>
<dbReference type="PROSITE" id="PS00963">
    <property type="entry name" value="RIBOSOMAL_S2_2"/>
    <property type="match status" value="1"/>
</dbReference>
<feature type="chain" id="PRO_1000115075" description="Small ribosomal subunit protein uS2">
    <location>
        <begin position="1"/>
        <end position="275"/>
    </location>
</feature>
<feature type="region of interest" description="Disordered" evidence="2">
    <location>
        <begin position="226"/>
        <end position="275"/>
    </location>
</feature>
<feature type="compositionally biased region" description="Low complexity" evidence="2">
    <location>
        <begin position="264"/>
        <end position="275"/>
    </location>
</feature>
<accession>B0RW65</accession>
<protein>
    <recommendedName>
        <fullName evidence="1">Small ribosomal subunit protein uS2</fullName>
    </recommendedName>
    <alternativeName>
        <fullName evidence="3">30S ribosomal protein S2</fullName>
    </alternativeName>
</protein>
<gene>
    <name evidence="1" type="primary">rpsB</name>
    <name type="ordered locus">xcc-b100_2922</name>
</gene>
<organism>
    <name type="scientific">Xanthomonas campestris pv. campestris (strain B100)</name>
    <dbReference type="NCBI Taxonomy" id="509169"/>
    <lineage>
        <taxon>Bacteria</taxon>
        <taxon>Pseudomonadati</taxon>
        <taxon>Pseudomonadota</taxon>
        <taxon>Gammaproteobacteria</taxon>
        <taxon>Lysobacterales</taxon>
        <taxon>Lysobacteraceae</taxon>
        <taxon>Xanthomonas</taxon>
    </lineage>
</organism>
<comment type="similarity">
    <text evidence="1">Belongs to the universal ribosomal protein uS2 family.</text>
</comment>
<name>RS2_XANCB</name>